<dbReference type="EMBL" id="AJ937746">
    <property type="protein sequence ID" value="CAI78451.1"/>
    <property type="molecule type" value="mRNA"/>
</dbReference>
<dbReference type="PDB" id="2J23">
    <property type="method" value="X-ray"/>
    <property type="resolution" value="1.41 A"/>
    <property type="chains" value="A/B=1-105"/>
</dbReference>
<dbReference type="PDBsum" id="2J23"/>
<dbReference type="SMR" id="Q1RQI9"/>
<dbReference type="Allergome" id="2680">
    <property type="allergen name" value="Mala s 13"/>
</dbReference>
<dbReference type="Allergome" id="3368">
    <property type="allergen name" value="Mala s 13.0101"/>
</dbReference>
<dbReference type="VEuPathDB" id="FungiDB:MSYG_0361"/>
<dbReference type="EvolutionaryTrace" id="Q1RQI9"/>
<dbReference type="GO" id="GO:0015035">
    <property type="term" value="F:protein-disulfide reductase activity"/>
    <property type="evidence" value="ECO:0007669"/>
    <property type="project" value="InterPro"/>
</dbReference>
<dbReference type="CDD" id="cd02947">
    <property type="entry name" value="TRX_family"/>
    <property type="match status" value="1"/>
</dbReference>
<dbReference type="FunFam" id="3.40.30.10:FF:000245">
    <property type="entry name" value="Thioredoxin"/>
    <property type="match status" value="1"/>
</dbReference>
<dbReference type="Gene3D" id="3.40.30.10">
    <property type="entry name" value="Glutaredoxin"/>
    <property type="match status" value="1"/>
</dbReference>
<dbReference type="InterPro" id="IPR005746">
    <property type="entry name" value="Thioredoxin"/>
</dbReference>
<dbReference type="InterPro" id="IPR036249">
    <property type="entry name" value="Thioredoxin-like_sf"/>
</dbReference>
<dbReference type="InterPro" id="IPR017937">
    <property type="entry name" value="Thioredoxin_CS"/>
</dbReference>
<dbReference type="InterPro" id="IPR013766">
    <property type="entry name" value="Thioredoxin_domain"/>
</dbReference>
<dbReference type="NCBIfam" id="TIGR01068">
    <property type="entry name" value="thioredoxin"/>
    <property type="match status" value="1"/>
</dbReference>
<dbReference type="PANTHER" id="PTHR46115">
    <property type="entry name" value="THIOREDOXIN-LIKE PROTEIN 1"/>
    <property type="match status" value="1"/>
</dbReference>
<dbReference type="Pfam" id="PF00085">
    <property type="entry name" value="Thioredoxin"/>
    <property type="match status" value="1"/>
</dbReference>
<dbReference type="PIRSF" id="PIRSF000077">
    <property type="entry name" value="Thioredoxin"/>
    <property type="match status" value="1"/>
</dbReference>
<dbReference type="PRINTS" id="PR00421">
    <property type="entry name" value="THIOREDOXIN"/>
</dbReference>
<dbReference type="SUPFAM" id="SSF52833">
    <property type="entry name" value="Thioredoxin-like"/>
    <property type="match status" value="1"/>
</dbReference>
<dbReference type="PROSITE" id="PS00194">
    <property type="entry name" value="THIOREDOXIN_1"/>
    <property type="match status" value="1"/>
</dbReference>
<dbReference type="PROSITE" id="PS51352">
    <property type="entry name" value="THIOREDOXIN_2"/>
    <property type="match status" value="1"/>
</dbReference>
<evidence type="ECO:0000250" key="1">
    <source>
        <dbReference type="UniProtKB" id="P10599"/>
    </source>
</evidence>
<evidence type="ECO:0000255" key="2">
    <source>
        <dbReference type="PIRSR" id="PIRSR000077-4"/>
    </source>
</evidence>
<evidence type="ECO:0000255" key="3">
    <source>
        <dbReference type="PROSITE-ProRule" id="PRU00691"/>
    </source>
</evidence>
<evidence type="ECO:0000269" key="4">
    <source>
    </source>
</evidence>
<evidence type="ECO:0000269" key="5">
    <source>
    </source>
</evidence>
<evidence type="ECO:0000303" key="6">
    <source>
    </source>
</evidence>
<evidence type="ECO:0000303" key="7">
    <source>
    </source>
</evidence>
<evidence type="ECO:0000305" key="8"/>
<evidence type="ECO:0000312" key="9">
    <source>
        <dbReference type="EMBL" id="CAI78451.1"/>
    </source>
</evidence>
<evidence type="ECO:0007744" key="10">
    <source>
        <dbReference type="PDB" id="2J23"/>
    </source>
</evidence>
<evidence type="ECO:0007829" key="11">
    <source>
        <dbReference type="PDB" id="2J23"/>
    </source>
</evidence>
<name>THIO_MALSM</name>
<reference evidence="9 10" key="1">
    <citation type="journal article" date="2007" name="J. Immunol.">
        <title>Cross-reactivity and 1.4-A crystal structure of Malassezia sympodialis thioredoxin (Mala s 13), a member of a new pan-allergen family.</title>
        <authorList>
            <person name="Limacher A."/>
            <person name="Glaser A.G."/>
            <person name="Meier C."/>
            <person name="Schmid-Grendelmeier P."/>
            <person name="Zeller S."/>
            <person name="Scapozza L."/>
            <person name="Crameri R."/>
        </authorList>
    </citation>
    <scope>NUCLEOTIDE SEQUENCE [MRNA]</scope>
    <scope>X-RAY CRYSTALLOGRAPHY (1.41 ANGSTROMS)</scope>
    <scope>FUNCTION</scope>
    <scope>SUBUNIT</scope>
    <scope>ALLERGEN</scope>
    <scope>DISULFIDE BOND</scope>
</reference>
<reference key="2">
    <citation type="journal article" date="2008" name="Allergy">
        <title>Auto- and cross-reactivity to thioredoxin allergens in allergic bronchopulmonary aspergillosis.</title>
        <authorList>
            <person name="Glaser A.G."/>
            <person name="Menz G."/>
            <person name="Kirsch A.I."/>
            <person name="Zeller S."/>
            <person name="Crameri R."/>
            <person name="Rhyner C."/>
        </authorList>
    </citation>
    <scope>FUNCTION</scope>
    <scope>ALLERGEN</scope>
</reference>
<comment type="function">
    <text evidence="4 5">Participates in various redox reactions through the reversible oxidation of its active center dithiol to a disulfide and catalyzes dithiol-disulfide exchange reactions.</text>
</comment>
<comment type="subunit">
    <text evidence="4">Monomer.</text>
</comment>
<comment type="allergen">
    <text evidence="4 5">Causes an allergic reaction in human (PubMed:17182577, PubMed:19032234). Recombinant protein binds to IgE in atopic eczema-suffering patients allergic to M.sympodialis (PubMed:17182577). Recombinant protein binds to IgE in 50% of the 40 patients tested suffering from allergic bronchopulmonary aspergillosis (ABPA). Causes a positive skin reaction and induces proliferation of the human peripheral blood mononuclear cells in ABPA patients allergic to this protein (PubMed:19032234).</text>
</comment>
<comment type="similarity">
    <text evidence="8">Belongs to the thioredoxin family.</text>
</comment>
<keyword id="KW-0002">3D-structure</keyword>
<keyword id="KW-0020">Allergen</keyword>
<keyword id="KW-1015">Disulfide bond</keyword>
<keyword id="KW-0676">Redox-active center</keyword>
<feature type="chain" id="PRO_0000449240" description="Thioredoxin">
    <location>
        <begin position="1" status="less than"/>
        <end position="105"/>
    </location>
</feature>
<feature type="domain" description="Thioredoxin" evidence="3">
    <location>
        <begin position="1" status="less than"/>
        <end position="105"/>
    </location>
</feature>
<feature type="active site" description="Nucleophile" evidence="1">
    <location>
        <position position="29"/>
    </location>
</feature>
<feature type="active site" description="Nucleophile" evidence="1">
    <location>
        <position position="32"/>
    </location>
</feature>
<feature type="site" description="Deprotonates C-terminal active site Cys" evidence="1">
    <location>
        <position position="23"/>
    </location>
</feature>
<feature type="site" description="Contributes to redox potential value" evidence="1">
    <location>
        <position position="30"/>
    </location>
</feature>
<feature type="site" description="Contributes to redox potential value" evidence="1">
    <location>
        <position position="31"/>
    </location>
</feature>
<feature type="disulfide bond" description="Redox-active" evidence="2 3 4 10">
    <location>
        <begin position="29"/>
        <end position="32"/>
    </location>
</feature>
<feature type="non-terminal residue" evidence="9">
    <location>
        <position position="1"/>
    </location>
</feature>
<feature type="strand" evidence="11">
    <location>
        <begin position="1"/>
        <end position="3"/>
    </location>
</feature>
<feature type="helix" evidence="11">
    <location>
        <begin position="7"/>
        <end position="14"/>
    </location>
</feature>
<feature type="strand" evidence="11">
    <location>
        <begin position="15"/>
        <end position="18"/>
    </location>
</feature>
<feature type="strand" evidence="11">
    <location>
        <begin position="20"/>
        <end position="25"/>
    </location>
</feature>
<feature type="helix" evidence="11">
    <location>
        <begin position="31"/>
        <end position="43"/>
    </location>
</feature>
<feature type="helix" evidence="11">
    <location>
        <begin position="47"/>
        <end position="50"/>
    </location>
</feature>
<feature type="strand" evidence="11">
    <location>
        <begin position="51"/>
        <end position="57"/>
    </location>
</feature>
<feature type="turn" evidence="11">
    <location>
        <begin position="58"/>
        <end position="60"/>
    </location>
</feature>
<feature type="helix" evidence="11">
    <location>
        <begin position="62"/>
        <end position="68"/>
    </location>
</feature>
<feature type="strand" evidence="11">
    <location>
        <begin position="72"/>
        <end position="80"/>
    </location>
</feature>
<feature type="strand" evidence="11">
    <location>
        <begin position="83"/>
        <end position="91"/>
    </location>
</feature>
<feature type="helix" evidence="11">
    <location>
        <begin position="93"/>
        <end position="103"/>
    </location>
</feature>
<sequence>VQVISSYDQFKQVTGGDKVVVIDFWATWCGPCKMIGPVFEKISDTPAGDKVGFYKVDVDEQSQIAQEVGIRAMPTFVFFKNGQKIDTVVGADPSKLQAAITQHSA</sequence>
<accession>Q1RQI9</accession>
<organism evidence="9">
    <name type="scientific">Malassezia sympodialis</name>
    <name type="common">Atopic eczema-associated yeast</name>
    <dbReference type="NCBI Taxonomy" id="76777"/>
    <lineage>
        <taxon>Eukaryota</taxon>
        <taxon>Fungi</taxon>
        <taxon>Dikarya</taxon>
        <taxon>Basidiomycota</taxon>
        <taxon>Ustilaginomycotina</taxon>
        <taxon>Malasseziomycetes</taxon>
        <taxon>Malasseziales</taxon>
        <taxon>Malasseziaceae</taxon>
        <taxon>Malassezia</taxon>
    </lineage>
</organism>
<protein>
    <recommendedName>
        <fullName evidence="6 7 9">Thioredoxin</fullName>
        <shortName evidence="6 7">Trx</shortName>
    </recommendedName>
    <alternativeName>
        <fullName evidence="6 7">Allergen Mala s 13</fullName>
    </alternativeName>
    <allergenName evidence="8">Mala s 13.0101</allergenName>
</protein>
<proteinExistence type="evidence at protein level"/>